<proteinExistence type="inferred from homology"/>
<sequence>MGQVLPLVTRQGDRIAIVSGLRTPFARQATAFHGIPAVDLGKMVVGELLARSEIPAEVIEQLVFGQVVQMPEAPNIAREIVLGTGMNVHTDAYSVSRACATSFQAVANVAESLMAGTIRAGIAGGADSSSVLPIGVSKKLARVLVDVNKARTMSQRLKLFSRLRLRDLMPVPPAVAEYSTGLRMGDTAEQMAKTYGITREQQDALAHRSHQRAAQAWSDGKLKEEVMTAFIPPYKQPLVEDNNIRGNSSLADYAKLRPAFDRKHGTVTAANSTPLTDGAAAVILMTESRAKELGLVPLGYLRSYAFTAIDVWQDMLLGPAWSTPLALERAGLTMSDLTLIDMHEAFAAQTLANIQLLGSERFAREVLGRAHATGEVDDSKFNVLGGSIAYGHPFAATGARMITQTLHELRRRGGGFGLVTACAAGGLGAAMVLEAE</sequence>
<protein>
    <recommendedName>
        <fullName evidence="1">3-ketoacyl-CoA thiolase</fullName>
        <ecNumber evidence="1">2.3.1.16</ecNumber>
    </recommendedName>
    <alternativeName>
        <fullName evidence="1">ACSs</fullName>
    </alternativeName>
    <alternativeName>
        <fullName evidence="1">Acetyl-CoA acyltransferase</fullName>
    </alternativeName>
    <alternativeName>
        <fullName evidence="1">Acyl-CoA ligase</fullName>
    </alternativeName>
    <alternativeName>
        <fullName evidence="1">Beta-ketothiolase</fullName>
    </alternativeName>
    <alternativeName>
        <fullName evidence="1">Fatty acid oxidation complex subunit beta</fullName>
    </alternativeName>
</protein>
<accession>B7M6M3</accession>
<gene>
    <name evidence="1" type="primary">fadI</name>
    <name type="ordered locus">ECIAI1_2419</name>
</gene>
<feature type="chain" id="PRO_1000185963" description="3-ketoacyl-CoA thiolase">
    <location>
        <begin position="1"/>
        <end position="436"/>
    </location>
</feature>
<feature type="active site" description="Acyl-thioester intermediate" evidence="1">
    <location>
        <position position="99"/>
    </location>
</feature>
<feature type="active site" description="Proton acceptor" evidence="1">
    <location>
        <position position="392"/>
    </location>
</feature>
<feature type="active site" description="Proton acceptor" evidence="1">
    <location>
        <position position="422"/>
    </location>
</feature>
<keyword id="KW-0012">Acyltransferase</keyword>
<keyword id="KW-0963">Cytoplasm</keyword>
<keyword id="KW-0276">Fatty acid metabolism</keyword>
<keyword id="KW-0442">Lipid degradation</keyword>
<keyword id="KW-0443">Lipid metabolism</keyword>
<keyword id="KW-0808">Transferase</keyword>
<dbReference type="EC" id="2.3.1.16" evidence="1"/>
<dbReference type="EMBL" id="CU928160">
    <property type="protein sequence ID" value="CAQ99261.1"/>
    <property type="molecule type" value="Genomic_DNA"/>
</dbReference>
<dbReference type="RefSeq" id="WP_000531954.1">
    <property type="nucleotide sequence ID" value="NC_011741.1"/>
</dbReference>
<dbReference type="SMR" id="B7M6M3"/>
<dbReference type="GeneID" id="75202576"/>
<dbReference type="KEGG" id="ecr:ECIAI1_2419"/>
<dbReference type="HOGENOM" id="CLU_031026_2_0_6"/>
<dbReference type="UniPathway" id="UPA00659"/>
<dbReference type="GO" id="GO:0005829">
    <property type="term" value="C:cytosol"/>
    <property type="evidence" value="ECO:0007669"/>
    <property type="project" value="TreeGrafter"/>
</dbReference>
<dbReference type="GO" id="GO:0003988">
    <property type="term" value="F:acetyl-CoA C-acyltransferase activity"/>
    <property type="evidence" value="ECO:0007669"/>
    <property type="project" value="UniProtKB-UniRule"/>
</dbReference>
<dbReference type="GO" id="GO:0006635">
    <property type="term" value="P:fatty acid beta-oxidation"/>
    <property type="evidence" value="ECO:0007669"/>
    <property type="project" value="UniProtKB-UniRule"/>
</dbReference>
<dbReference type="CDD" id="cd00751">
    <property type="entry name" value="thiolase"/>
    <property type="match status" value="1"/>
</dbReference>
<dbReference type="FunFam" id="3.40.47.10:FF:000011">
    <property type="entry name" value="3-ketoacyl-CoA thiolase"/>
    <property type="match status" value="1"/>
</dbReference>
<dbReference type="Gene3D" id="3.40.47.10">
    <property type="match status" value="1"/>
</dbReference>
<dbReference type="HAMAP" id="MF_01618">
    <property type="entry name" value="FadI"/>
    <property type="match status" value="1"/>
</dbReference>
<dbReference type="InterPro" id="IPR012806">
    <property type="entry name" value="Ac-CoA_C-AcTrfase_FadI"/>
</dbReference>
<dbReference type="InterPro" id="IPR002155">
    <property type="entry name" value="Thiolase"/>
</dbReference>
<dbReference type="InterPro" id="IPR016039">
    <property type="entry name" value="Thiolase-like"/>
</dbReference>
<dbReference type="InterPro" id="IPR020615">
    <property type="entry name" value="Thiolase_acyl_enz_int_AS"/>
</dbReference>
<dbReference type="InterPro" id="IPR020610">
    <property type="entry name" value="Thiolase_AS"/>
</dbReference>
<dbReference type="InterPro" id="IPR020617">
    <property type="entry name" value="Thiolase_C"/>
</dbReference>
<dbReference type="InterPro" id="IPR020613">
    <property type="entry name" value="Thiolase_CS"/>
</dbReference>
<dbReference type="InterPro" id="IPR020616">
    <property type="entry name" value="Thiolase_N"/>
</dbReference>
<dbReference type="NCBIfam" id="TIGR01930">
    <property type="entry name" value="AcCoA-C-Actrans"/>
    <property type="match status" value="1"/>
</dbReference>
<dbReference type="NCBIfam" id="TIGR02446">
    <property type="entry name" value="FadI"/>
    <property type="match status" value="1"/>
</dbReference>
<dbReference type="NCBIfam" id="NF006516">
    <property type="entry name" value="PRK08963.1"/>
    <property type="match status" value="1"/>
</dbReference>
<dbReference type="PANTHER" id="PTHR18919:SF107">
    <property type="entry name" value="ACETYL-COA ACETYLTRANSFERASE, CYTOSOLIC"/>
    <property type="match status" value="1"/>
</dbReference>
<dbReference type="PANTHER" id="PTHR18919">
    <property type="entry name" value="ACETYL-COA C-ACYLTRANSFERASE"/>
    <property type="match status" value="1"/>
</dbReference>
<dbReference type="Pfam" id="PF02803">
    <property type="entry name" value="Thiolase_C"/>
    <property type="match status" value="1"/>
</dbReference>
<dbReference type="Pfam" id="PF00108">
    <property type="entry name" value="Thiolase_N"/>
    <property type="match status" value="1"/>
</dbReference>
<dbReference type="PIRSF" id="PIRSF000429">
    <property type="entry name" value="Ac-CoA_Ac_transf"/>
    <property type="match status" value="1"/>
</dbReference>
<dbReference type="SUPFAM" id="SSF53901">
    <property type="entry name" value="Thiolase-like"/>
    <property type="match status" value="2"/>
</dbReference>
<dbReference type="PROSITE" id="PS00098">
    <property type="entry name" value="THIOLASE_1"/>
    <property type="match status" value="1"/>
</dbReference>
<dbReference type="PROSITE" id="PS00737">
    <property type="entry name" value="THIOLASE_2"/>
    <property type="match status" value="1"/>
</dbReference>
<dbReference type="PROSITE" id="PS00099">
    <property type="entry name" value="THIOLASE_3"/>
    <property type="match status" value="1"/>
</dbReference>
<organism>
    <name type="scientific">Escherichia coli O8 (strain IAI1)</name>
    <dbReference type="NCBI Taxonomy" id="585034"/>
    <lineage>
        <taxon>Bacteria</taxon>
        <taxon>Pseudomonadati</taxon>
        <taxon>Pseudomonadota</taxon>
        <taxon>Gammaproteobacteria</taxon>
        <taxon>Enterobacterales</taxon>
        <taxon>Enterobacteriaceae</taxon>
        <taxon>Escherichia</taxon>
    </lineage>
</organism>
<name>FADI_ECO8A</name>
<reference key="1">
    <citation type="journal article" date="2009" name="PLoS Genet.">
        <title>Organised genome dynamics in the Escherichia coli species results in highly diverse adaptive paths.</title>
        <authorList>
            <person name="Touchon M."/>
            <person name="Hoede C."/>
            <person name="Tenaillon O."/>
            <person name="Barbe V."/>
            <person name="Baeriswyl S."/>
            <person name="Bidet P."/>
            <person name="Bingen E."/>
            <person name="Bonacorsi S."/>
            <person name="Bouchier C."/>
            <person name="Bouvet O."/>
            <person name="Calteau A."/>
            <person name="Chiapello H."/>
            <person name="Clermont O."/>
            <person name="Cruveiller S."/>
            <person name="Danchin A."/>
            <person name="Diard M."/>
            <person name="Dossat C."/>
            <person name="Karoui M.E."/>
            <person name="Frapy E."/>
            <person name="Garry L."/>
            <person name="Ghigo J.M."/>
            <person name="Gilles A.M."/>
            <person name="Johnson J."/>
            <person name="Le Bouguenec C."/>
            <person name="Lescat M."/>
            <person name="Mangenot S."/>
            <person name="Martinez-Jehanne V."/>
            <person name="Matic I."/>
            <person name="Nassif X."/>
            <person name="Oztas S."/>
            <person name="Petit M.A."/>
            <person name="Pichon C."/>
            <person name="Rouy Z."/>
            <person name="Ruf C.S."/>
            <person name="Schneider D."/>
            <person name="Tourret J."/>
            <person name="Vacherie B."/>
            <person name="Vallenet D."/>
            <person name="Medigue C."/>
            <person name="Rocha E.P.C."/>
            <person name="Denamur E."/>
        </authorList>
    </citation>
    <scope>NUCLEOTIDE SEQUENCE [LARGE SCALE GENOMIC DNA]</scope>
    <source>
        <strain>IAI1</strain>
    </source>
</reference>
<comment type="function">
    <text evidence="1">Catalyzes the final step of fatty acid oxidation in which acetyl-CoA is released and the CoA ester of a fatty acid two carbons shorter is formed.</text>
</comment>
<comment type="catalytic activity">
    <reaction evidence="1">
        <text>an acyl-CoA + acetyl-CoA = a 3-oxoacyl-CoA + CoA</text>
        <dbReference type="Rhea" id="RHEA:21564"/>
        <dbReference type="ChEBI" id="CHEBI:57287"/>
        <dbReference type="ChEBI" id="CHEBI:57288"/>
        <dbReference type="ChEBI" id="CHEBI:58342"/>
        <dbReference type="ChEBI" id="CHEBI:90726"/>
        <dbReference type="EC" id="2.3.1.16"/>
    </reaction>
</comment>
<comment type="pathway">
    <text evidence="1">Lipid metabolism; fatty acid beta-oxidation.</text>
</comment>
<comment type="subunit">
    <text evidence="1">Heterotetramer of two alpha chains (FadJ) and two beta chains (FadI).</text>
</comment>
<comment type="subcellular location">
    <subcellularLocation>
        <location evidence="1">Cytoplasm</location>
    </subcellularLocation>
</comment>
<comment type="similarity">
    <text evidence="1">Belongs to the thiolase-like superfamily. Thiolase family.</text>
</comment>
<evidence type="ECO:0000255" key="1">
    <source>
        <dbReference type="HAMAP-Rule" id="MF_01618"/>
    </source>
</evidence>